<protein>
    <recommendedName>
        <fullName>NADH-quinone oxidoreductase subunit B/C/D</fullName>
        <ecNumber>7.1.1.-</ecNumber>
    </recommendedName>
    <alternativeName>
        <fullName>NADH dehydrogenase I subunit B/C/D</fullName>
    </alternativeName>
    <alternativeName>
        <fullName>NDH-1 subunit B/C/D</fullName>
    </alternativeName>
</protein>
<gene>
    <name type="primary">nuoBCD</name>
    <name type="synonym">nuoB</name>
    <name type="synonym">nuoC</name>
    <name type="synonym">nuoD</name>
    <name type="ordered locus">Sfum_1942</name>
</gene>
<accession>A0LJM5</accession>
<dbReference type="EC" id="7.1.1.-"/>
<dbReference type="EMBL" id="CP000478">
    <property type="protein sequence ID" value="ABK17627.1"/>
    <property type="molecule type" value="Genomic_DNA"/>
</dbReference>
<dbReference type="RefSeq" id="WP_011698797.1">
    <property type="nucleotide sequence ID" value="NC_008554.1"/>
</dbReference>
<dbReference type="SMR" id="A0LJM5"/>
<dbReference type="FunCoup" id="A0LJM5">
    <property type="interactions" value="375"/>
</dbReference>
<dbReference type="STRING" id="335543.Sfum_1942"/>
<dbReference type="KEGG" id="sfu:Sfum_1942"/>
<dbReference type="eggNOG" id="COG0377">
    <property type="taxonomic scope" value="Bacteria"/>
</dbReference>
<dbReference type="eggNOG" id="COG0649">
    <property type="taxonomic scope" value="Bacteria"/>
</dbReference>
<dbReference type="eggNOG" id="COG0852">
    <property type="taxonomic scope" value="Bacteria"/>
</dbReference>
<dbReference type="HOGENOM" id="CLU_015134_5_1_7"/>
<dbReference type="InParanoid" id="A0LJM5"/>
<dbReference type="OrthoDB" id="9801496at2"/>
<dbReference type="Proteomes" id="UP000001784">
    <property type="component" value="Chromosome"/>
</dbReference>
<dbReference type="GO" id="GO:0005886">
    <property type="term" value="C:plasma membrane"/>
    <property type="evidence" value="ECO:0007669"/>
    <property type="project" value="UniProtKB-SubCell"/>
</dbReference>
<dbReference type="GO" id="GO:0051539">
    <property type="term" value="F:4 iron, 4 sulfur cluster binding"/>
    <property type="evidence" value="ECO:0007669"/>
    <property type="project" value="InterPro"/>
</dbReference>
<dbReference type="GO" id="GO:0005506">
    <property type="term" value="F:iron ion binding"/>
    <property type="evidence" value="ECO:0007669"/>
    <property type="project" value="UniProtKB-UniRule"/>
</dbReference>
<dbReference type="GO" id="GO:0051287">
    <property type="term" value="F:NAD binding"/>
    <property type="evidence" value="ECO:0007669"/>
    <property type="project" value="InterPro"/>
</dbReference>
<dbReference type="GO" id="GO:0008137">
    <property type="term" value="F:NADH dehydrogenase (ubiquinone) activity"/>
    <property type="evidence" value="ECO:0007669"/>
    <property type="project" value="InterPro"/>
</dbReference>
<dbReference type="GO" id="GO:0050136">
    <property type="term" value="F:NADH:ubiquinone reductase (non-electrogenic) activity"/>
    <property type="evidence" value="ECO:0007669"/>
    <property type="project" value="UniProtKB-UniRule"/>
</dbReference>
<dbReference type="GO" id="GO:0048038">
    <property type="term" value="F:quinone binding"/>
    <property type="evidence" value="ECO:0007669"/>
    <property type="project" value="UniProtKB-KW"/>
</dbReference>
<dbReference type="FunFam" id="3.40.50.12280:FF:000002">
    <property type="entry name" value="NADH-quinone oxidoreductase subunit B"/>
    <property type="match status" value="1"/>
</dbReference>
<dbReference type="Gene3D" id="3.40.50.12280">
    <property type="match status" value="1"/>
</dbReference>
<dbReference type="Gene3D" id="1.10.645.10">
    <property type="entry name" value="Cytochrome-c3 Hydrogenase, chain B"/>
    <property type="match status" value="1"/>
</dbReference>
<dbReference type="Gene3D" id="3.30.460.80">
    <property type="entry name" value="NADH:ubiquinone oxidoreductase, 30kDa subunit"/>
    <property type="match status" value="1"/>
</dbReference>
<dbReference type="HAMAP" id="MF_01356">
    <property type="entry name" value="NDH1_NuoB"/>
    <property type="match status" value="1"/>
</dbReference>
<dbReference type="HAMAP" id="MF_01357">
    <property type="entry name" value="NDH1_NuoC"/>
    <property type="match status" value="1"/>
</dbReference>
<dbReference type="HAMAP" id="MF_01358">
    <property type="entry name" value="NDH1_NuoD"/>
    <property type="match status" value="1"/>
</dbReference>
<dbReference type="InterPro" id="IPR010218">
    <property type="entry name" value="NADH_DH_suC"/>
</dbReference>
<dbReference type="InterPro" id="IPR001135">
    <property type="entry name" value="NADH_Q_OxRdtase_suD"/>
</dbReference>
<dbReference type="InterPro" id="IPR037232">
    <property type="entry name" value="NADH_quin_OxRdtase_su_C/D-like"/>
</dbReference>
<dbReference type="InterPro" id="IPR006137">
    <property type="entry name" value="NADH_UbQ_OxRdtase-like_20kDa"/>
</dbReference>
<dbReference type="InterPro" id="IPR001268">
    <property type="entry name" value="NADH_UbQ_OxRdtase_30kDa_su"/>
</dbReference>
<dbReference type="InterPro" id="IPR014029">
    <property type="entry name" value="NADH_UbQ_OxRdtase_49kDa_CS"/>
</dbReference>
<dbReference type="InterPro" id="IPR020396">
    <property type="entry name" value="NADH_UbQ_OxRdtase_CS"/>
</dbReference>
<dbReference type="InterPro" id="IPR006138">
    <property type="entry name" value="NADH_UQ_OxRdtase_20Kd_su"/>
</dbReference>
<dbReference type="InterPro" id="IPR022885">
    <property type="entry name" value="NDH1_su_D/H"/>
</dbReference>
<dbReference type="InterPro" id="IPR029014">
    <property type="entry name" value="NiFe-Hase_large"/>
</dbReference>
<dbReference type="NCBIfam" id="TIGR01957">
    <property type="entry name" value="nuoB_fam"/>
    <property type="match status" value="1"/>
</dbReference>
<dbReference type="NCBIfam" id="TIGR01961">
    <property type="entry name" value="NuoC_fam"/>
    <property type="match status" value="1"/>
</dbReference>
<dbReference type="NCBIfam" id="TIGR01962">
    <property type="entry name" value="NuoD"/>
    <property type="match status" value="1"/>
</dbReference>
<dbReference type="NCBIfam" id="NF004739">
    <property type="entry name" value="PRK06075.1"/>
    <property type="match status" value="1"/>
</dbReference>
<dbReference type="NCBIfam" id="NF005012">
    <property type="entry name" value="PRK06411.1"/>
    <property type="match status" value="1"/>
</dbReference>
<dbReference type="NCBIfam" id="NF009808">
    <property type="entry name" value="PRK13292.1"/>
    <property type="match status" value="1"/>
</dbReference>
<dbReference type="PANTHER" id="PTHR11993:SF45">
    <property type="entry name" value="NADH-QUINONE OXIDOREDUCTASE SUBUNIT C_D"/>
    <property type="match status" value="1"/>
</dbReference>
<dbReference type="PANTHER" id="PTHR11993">
    <property type="entry name" value="NADH-UBIQUINONE OXIDOREDUCTASE 49 KDA SUBUNIT"/>
    <property type="match status" value="1"/>
</dbReference>
<dbReference type="Pfam" id="PF00329">
    <property type="entry name" value="Complex1_30kDa"/>
    <property type="match status" value="1"/>
</dbReference>
<dbReference type="Pfam" id="PF00346">
    <property type="entry name" value="Complex1_49kDa"/>
    <property type="match status" value="1"/>
</dbReference>
<dbReference type="Pfam" id="PF01058">
    <property type="entry name" value="Oxidored_q6"/>
    <property type="match status" value="1"/>
</dbReference>
<dbReference type="SUPFAM" id="SSF56770">
    <property type="entry name" value="HydA/Nqo6-like"/>
    <property type="match status" value="1"/>
</dbReference>
<dbReference type="SUPFAM" id="SSF56762">
    <property type="entry name" value="HydB/Nqo4-like"/>
    <property type="match status" value="1"/>
</dbReference>
<dbReference type="SUPFAM" id="SSF143243">
    <property type="entry name" value="Nqo5-like"/>
    <property type="match status" value="1"/>
</dbReference>
<dbReference type="PROSITE" id="PS00542">
    <property type="entry name" value="COMPLEX1_30K"/>
    <property type="match status" value="1"/>
</dbReference>
<dbReference type="PROSITE" id="PS00535">
    <property type="entry name" value="COMPLEX1_49K"/>
    <property type="match status" value="1"/>
</dbReference>
<feature type="chain" id="PRO_0000358703" description="NADH-quinone oxidoreductase subunit B/C/D">
    <location>
        <begin position="1"/>
        <end position="787"/>
    </location>
</feature>
<feature type="region of interest" description="NADH dehydrogenase I subunit B" evidence="1">
    <location>
        <begin position="1"/>
        <end position="149"/>
    </location>
</feature>
<feature type="region of interest" description="Disordered" evidence="2">
    <location>
        <begin position="154"/>
        <end position="205"/>
    </location>
</feature>
<feature type="region of interest" description="NADH dehydrogenase I subunit C" evidence="1">
    <location>
        <begin position="225"/>
        <end position="380"/>
    </location>
</feature>
<feature type="region of interest" description="NADH dehydrogenase I subunit D" evidence="1">
    <location>
        <begin position="407"/>
        <end position="787"/>
    </location>
</feature>
<feature type="compositionally biased region" description="Polar residues" evidence="2">
    <location>
        <begin position="191"/>
        <end position="202"/>
    </location>
</feature>
<name>NUBCD_SYNFM</name>
<reference key="1">
    <citation type="submission" date="2006-10" db="EMBL/GenBank/DDBJ databases">
        <title>Complete sequence of Syntrophobacter fumaroxidans MPOB.</title>
        <authorList>
            <consortium name="US DOE Joint Genome Institute"/>
            <person name="Copeland A."/>
            <person name="Lucas S."/>
            <person name="Lapidus A."/>
            <person name="Barry K."/>
            <person name="Detter J.C."/>
            <person name="Glavina del Rio T."/>
            <person name="Hammon N."/>
            <person name="Israni S."/>
            <person name="Pitluck S."/>
            <person name="Goltsman E.G."/>
            <person name="Martinez M."/>
            <person name="Schmutz J."/>
            <person name="Larimer F."/>
            <person name="Land M."/>
            <person name="Hauser L."/>
            <person name="Kyrpides N."/>
            <person name="Kim E."/>
            <person name="Boone D.R."/>
            <person name="Brockman F."/>
            <person name="Culley D."/>
            <person name="Ferry J."/>
            <person name="Gunsalus R."/>
            <person name="McInerney M.J."/>
            <person name="Morrison M."/>
            <person name="Plugge C."/>
            <person name="Rohlin L."/>
            <person name="Scholten J."/>
            <person name="Sieber J."/>
            <person name="Stams A.J.M."/>
            <person name="Worm P."/>
            <person name="Henstra A.M."/>
            <person name="Richardson P."/>
        </authorList>
    </citation>
    <scope>NUCLEOTIDE SEQUENCE [LARGE SCALE GENOMIC DNA]</scope>
    <source>
        <strain>DSM 10017 / MPOB</strain>
    </source>
</reference>
<evidence type="ECO:0000250" key="1"/>
<evidence type="ECO:0000256" key="2">
    <source>
        <dbReference type="SAM" id="MobiDB-lite"/>
    </source>
</evidence>
<evidence type="ECO:0000305" key="3"/>
<keyword id="KW-0997">Cell inner membrane</keyword>
<keyword id="KW-1003">Cell membrane</keyword>
<keyword id="KW-0472">Membrane</keyword>
<keyword id="KW-0511">Multifunctional enzyme</keyword>
<keyword id="KW-0520">NAD</keyword>
<keyword id="KW-0874">Quinone</keyword>
<keyword id="KW-1185">Reference proteome</keyword>
<keyword id="KW-1278">Translocase</keyword>
<keyword id="KW-0813">Transport</keyword>
<keyword id="KW-0830">Ubiquinone</keyword>
<organism>
    <name type="scientific">Syntrophobacter fumaroxidans (strain DSM 10017 / MPOB)</name>
    <dbReference type="NCBI Taxonomy" id="335543"/>
    <lineage>
        <taxon>Bacteria</taxon>
        <taxon>Pseudomonadati</taxon>
        <taxon>Thermodesulfobacteriota</taxon>
        <taxon>Syntrophobacteria</taxon>
        <taxon>Syntrophobacterales</taxon>
        <taxon>Syntrophobacteraceae</taxon>
        <taxon>Syntrophobacter</taxon>
    </lineage>
</organism>
<sequence length="787" mass="88858">MSDRFLSAADFVLNWSRKYSLWPLFFGLSCCFVEEATAFTPRYDMARFGAEVLRPSPRQADLLIVSGTVFKKIAPVVLRLYEQMAEPKWVISMGSCSNCGGMYDVYSVVQGIDQILPVDVYIPGCPPRPEAVLQGLTLLQKKIAAEERPARSVLHLPGGSQGSTRPVLVDGATKSRDPRGPGMEGTVIRGTANTPPAFTGSRSDLMWTPPARRIESSEREKELARVLSERFGDAVREEPFTSDMPTFHVETNRLKDVLGFLKKEASPRFLRLDDLTAVDESARRDRSAYPDWTMVYHLLSFEPAGRVRLKTGLHGRQPALPSITDIWPSANWYEREVYDLFGIRFEGHPNLRRIMMPHDWEGHPLRKDYPGRATQMAPYTLGDARVHQPPDGGIFTKDPGGDRLVLNIGPSHVSTHGLLRYVVSLDGEEISDLELEIGYHHRGVEKIGERQTWHQFIPYCARVDYLAGAANDLPYVMAVETLADIKVPERAQVIRVLLSELFRLSNHLVWFATYAHDVGAMTPNFYTFTEREMILDIVELITGGRLHPSWFRLGGVAADLPEGWKEAVDALVRIFPGRLREYESLIRKNPIFKARTQGVGRISREDAVDWGVSGPNLRACGLEWDLRRKFPYSGYENFEFEVPTAVEGDCYARYLVRVEEMRQSLRIIEQAAANMPSGRHVTDDYRYVIPDRRDTLKNIESLIHHFVNVTRGPRIPKGEAYVSCEIPRGEQGYYVVGDGLGYAYRMRIRGPGFANVQVMPLLARGESIADLIAIIGSVDYILPDIDR</sequence>
<proteinExistence type="inferred from homology"/>
<comment type="function">
    <text evidence="1">NDH-1 shuttles electrons from NADH, via FMN and iron-sulfur (Fe-S) centers, to quinones in the respiratory chain. The immediate electron acceptor for the enzyme in this species is believed to be ubiquinone. Couples the redox reaction to proton translocation (for every two electrons transferred, four hydrogen ions are translocated across the cytoplasmic membrane), and thus conserves the redox energy in a proton gradient.</text>
</comment>
<comment type="catalytic activity">
    <reaction>
        <text>a quinone + NADH + 5 H(+)(in) = a quinol + NAD(+) + 4 H(+)(out)</text>
        <dbReference type="Rhea" id="RHEA:57888"/>
        <dbReference type="ChEBI" id="CHEBI:15378"/>
        <dbReference type="ChEBI" id="CHEBI:24646"/>
        <dbReference type="ChEBI" id="CHEBI:57540"/>
        <dbReference type="ChEBI" id="CHEBI:57945"/>
        <dbReference type="ChEBI" id="CHEBI:132124"/>
    </reaction>
</comment>
<comment type="subunit">
    <text evidence="1">NDH-1 is composed of about 13 different subunits. Subunits NuoBCD, E, F, and G constitute the peripheral sector of the complex (By similarity).</text>
</comment>
<comment type="subcellular location">
    <subcellularLocation>
        <location evidence="1">Cell inner membrane</location>
        <topology evidence="1">Peripheral membrane protein</topology>
        <orientation evidence="1">Cytoplasmic side</orientation>
    </subcellularLocation>
</comment>
<comment type="similarity">
    <text evidence="3">In the N-terminal section; belongs to the complex I 20 kDa subunit family.</text>
</comment>
<comment type="similarity">
    <text evidence="3">In the central section; belongs to the complex I 30 kDa subunit family.</text>
</comment>
<comment type="similarity">
    <text evidence="3">In the C-terminal section; belongs to the complex I 49 kDa subunit family.</text>
</comment>